<proteinExistence type="evidence at protein level"/>
<accession>Q96S38</accession>
<accession>B1APS8</accession>
<accession>B3KVM4</accession>
<accession>D3DTA4</accession>
<accession>Q8TDD3</accession>
<accession>Q9NSF4</accession>
<accession>Q9UL66</accession>
<evidence type="ECO:0000250" key="1">
    <source>
        <dbReference type="UniProtKB" id="Q8BLK9"/>
    </source>
</evidence>
<evidence type="ECO:0000255" key="2">
    <source>
        <dbReference type="PROSITE-ProRule" id="PRU00147"/>
    </source>
</evidence>
<evidence type="ECO:0000255" key="3">
    <source>
        <dbReference type="PROSITE-ProRule" id="PRU00159"/>
    </source>
</evidence>
<evidence type="ECO:0000256" key="4">
    <source>
        <dbReference type="SAM" id="MobiDB-lite"/>
    </source>
</evidence>
<evidence type="ECO:0000269" key="5">
    <source>
    </source>
</evidence>
<evidence type="ECO:0000269" key="6">
    <source>
    </source>
</evidence>
<evidence type="ECO:0000269" key="7">
    <source>
    </source>
</evidence>
<evidence type="ECO:0000303" key="8">
    <source>
    </source>
</evidence>
<evidence type="ECO:0000305" key="9"/>
<evidence type="ECO:0007744" key="10">
    <source>
    </source>
</evidence>
<evidence type="ECO:0007744" key="11">
    <source>
    </source>
</evidence>
<evidence type="ECO:0007744" key="12">
    <source>
    </source>
</evidence>
<reference key="1">
    <citation type="journal article" date="2002" name="J. Biol. Chem.">
        <title>Identification and characterization of RPK118, a novel sphingosine kinase-1-binding protein.</title>
        <authorList>
            <person name="Hayashi S."/>
            <person name="Okada T."/>
            <person name="Igarashi N."/>
            <person name="Fujita T."/>
            <person name="Jahangeer S."/>
            <person name="Nakamura S."/>
        </authorList>
    </citation>
    <scope>NUCLEOTIDE SEQUENCE [MRNA] (ISOFORM 1)</scope>
    <scope>TISSUE SPECIFICITY</scope>
    <scope>INTERACTION WITH SPHK1 AND PHOSPHATIDYLINOSITOL 3-PHOSPHATE</scope>
    <scope>SUBCELLULAR LOCATION</scope>
    <scope>FUNCTION</scope>
</reference>
<reference key="2">
    <citation type="submission" date="2002-01" db="EMBL/GenBank/DDBJ databases">
        <authorList>
            <person name="Guo J.H."/>
            <person name="Yu L."/>
        </authorList>
    </citation>
    <scope>NUCLEOTIDE SEQUENCE [LARGE SCALE MRNA] (ISOFORM 1)</scope>
    <source>
        <tissue>Brain</tissue>
    </source>
</reference>
<reference key="3">
    <citation type="journal article" date="2004" name="Nat. Genet.">
        <title>Complete sequencing and characterization of 21,243 full-length human cDNAs.</title>
        <authorList>
            <person name="Ota T."/>
            <person name="Suzuki Y."/>
            <person name="Nishikawa T."/>
            <person name="Otsuki T."/>
            <person name="Sugiyama T."/>
            <person name="Irie R."/>
            <person name="Wakamatsu A."/>
            <person name="Hayashi K."/>
            <person name="Sato H."/>
            <person name="Nagai K."/>
            <person name="Kimura K."/>
            <person name="Makita H."/>
            <person name="Sekine M."/>
            <person name="Obayashi M."/>
            <person name="Nishi T."/>
            <person name="Shibahara T."/>
            <person name="Tanaka T."/>
            <person name="Ishii S."/>
            <person name="Yamamoto J."/>
            <person name="Saito K."/>
            <person name="Kawai Y."/>
            <person name="Isono Y."/>
            <person name="Nakamura Y."/>
            <person name="Nagahari K."/>
            <person name="Murakami K."/>
            <person name="Yasuda T."/>
            <person name="Iwayanagi T."/>
            <person name="Wagatsuma M."/>
            <person name="Shiratori A."/>
            <person name="Sudo H."/>
            <person name="Hosoiri T."/>
            <person name="Kaku Y."/>
            <person name="Kodaira H."/>
            <person name="Kondo H."/>
            <person name="Sugawara M."/>
            <person name="Takahashi M."/>
            <person name="Kanda K."/>
            <person name="Yokoi T."/>
            <person name="Furuya T."/>
            <person name="Kikkawa E."/>
            <person name="Omura Y."/>
            <person name="Abe K."/>
            <person name="Kamihara K."/>
            <person name="Katsuta N."/>
            <person name="Sato K."/>
            <person name="Tanikawa M."/>
            <person name="Yamazaki M."/>
            <person name="Ninomiya K."/>
            <person name="Ishibashi T."/>
            <person name="Yamashita H."/>
            <person name="Murakawa K."/>
            <person name="Fujimori K."/>
            <person name="Tanai H."/>
            <person name="Kimata M."/>
            <person name="Watanabe M."/>
            <person name="Hiraoka S."/>
            <person name="Chiba Y."/>
            <person name="Ishida S."/>
            <person name="Ono Y."/>
            <person name="Takiguchi S."/>
            <person name="Watanabe S."/>
            <person name="Yosida M."/>
            <person name="Hotuta T."/>
            <person name="Kusano J."/>
            <person name="Kanehori K."/>
            <person name="Takahashi-Fujii A."/>
            <person name="Hara H."/>
            <person name="Tanase T.-O."/>
            <person name="Nomura Y."/>
            <person name="Togiya S."/>
            <person name="Komai F."/>
            <person name="Hara R."/>
            <person name="Takeuchi K."/>
            <person name="Arita M."/>
            <person name="Imose N."/>
            <person name="Musashino K."/>
            <person name="Yuuki H."/>
            <person name="Oshima A."/>
            <person name="Sasaki N."/>
            <person name="Aotsuka S."/>
            <person name="Yoshikawa Y."/>
            <person name="Matsunawa H."/>
            <person name="Ichihara T."/>
            <person name="Shiohata N."/>
            <person name="Sano S."/>
            <person name="Moriya S."/>
            <person name="Momiyama H."/>
            <person name="Satoh N."/>
            <person name="Takami S."/>
            <person name="Terashima Y."/>
            <person name="Suzuki O."/>
            <person name="Nakagawa S."/>
            <person name="Senoh A."/>
            <person name="Mizoguchi H."/>
            <person name="Goto Y."/>
            <person name="Shimizu F."/>
            <person name="Wakebe H."/>
            <person name="Hishigaki H."/>
            <person name="Watanabe T."/>
            <person name="Sugiyama A."/>
            <person name="Takemoto M."/>
            <person name="Kawakami B."/>
            <person name="Yamazaki M."/>
            <person name="Watanabe K."/>
            <person name="Kumagai A."/>
            <person name="Itakura S."/>
            <person name="Fukuzumi Y."/>
            <person name="Fujimori Y."/>
            <person name="Komiyama M."/>
            <person name="Tashiro H."/>
            <person name="Tanigami A."/>
            <person name="Fujiwara T."/>
            <person name="Ono T."/>
            <person name="Yamada K."/>
            <person name="Fujii Y."/>
            <person name="Ozaki K."/>
            <person name="Hirao M."/>
            <person name="Ohmori Y."/>
            <person name="Kawabata A."/>
            <person name="Hikiji T."/>
            <person name="Kobatake N."/>
            <person name="Inagaki H."/>
            <person name="Ikema Y."/>
            <person name="Okamoto S."/>
            <person name="Okitani R."/>
            <person name="Kawakami T."/>
            <person name="Noguchi S."/>
            <person name="Itoh T."/>
            <person name="Shigeta K."/>
            <person name="Senba T."/>
            <person name="Matsumura K."/>
            <person name="Nakajima Y."/>
            <person name="Mizuno T."/>
            <person name="Morinaga M."/>
            <person name="Sasaki M."/>
            <person name="Togashi T."/>
            <person name="Oyama M."/>
            <person name="Hata H."/>
            <person name="Watanabe M."/>
            <person name="Komatsu T."/>
            <person name="Mizushima-Sugano J."/>
            <person name="Satoh T."/>
            <person name="Shirai Y."/>
            <person name="Takahashi Y."/>
            <person name="Nakagawa K."/>
            <person name="Okumura K."/>
            <person name="Nagase T."/>
            <person name="Nomura N."/>
            <person name="Kikuchi H."/>
            <person name="Masuho Y."/>
            <person name="Yamashita R."/>
            <person name="Nakai K."/>
            <person name="Yada T."/>
            <person name="Nakamura Y."/>
            <person name="Ohara O."/>
            <person name="Isogai T."/>
            <person name="Sugano S."/>
        </authorList>
    </citation>
    <scope>NUCLEOTIDE SEQUENCE [LARGE SCALE MRNA] (ISOFORMS 1 AND 2)</scope>
    <source>
        <tissue>Brain</tissue>
        <tissue>Testis</tissue>
    </source>
</reference>
<reference key="4">
    <citation type="journal article" date="2006" name="Nature">
        <title>The DNA sequence and biological annotation of human chromosome 1.</title>
        <authorList>
            <person name="Gregory S.G."/>
            <person name="Barlow K.F."/>
            <person name="McLay K.E."/>
            <person name="Kaul R."/>
            <person name="Swarbreck D."/>
            <person name="Dunham A."/>
            <person name="Scott C.E."/>
            <person name="Howe K.L."/>
            <person name="Woodfine K."/>
            <person name="Spencer C.C.A."/>
            <person name="Jones M.C."/>
            <person name="Gillson C."/>
            <person name="Searle S."/>
            <person name="Zhou Y."/>
            <person name="Kokocinski F."/>
            <person name="McDonald L."/>
            <person name="Evans R."/>
            <person name="Phillips K."/>
            <person name="Atkinson A."/>
            <person name="Cooper R."/>
            <person name="Jones C."/>
            <person name="Hall R.E."/>
            <person name="Andrews T.D."/>
            <person name="Lloyd C."/>
            <person name="Ainscough R."/>
            <person name="Almeida J.P."/>
            <person name="Ambrose K.D."/>
            <person name="Anderson F."/>
            <person name="Andrew R.W."/>
            <person name="Ashwell R.I.S."/>
            <person name="Aubin K."/>
            <person name="Babbage A.K."/>
            <person name="Bagguley C.L."/>
            <person name="Bailey J."/>
            <person name="Beasley H."/>
            <person name="Bethel G."/>
            <person name="Bird C.P."/>
            <person name="Bray-Allen S."/>
            <person name="Brown J.Y."/>
            <person name="Brown A.J."/>
            <person name="Buckley D."/>
            <person name="Burton J."/>
            <person name="Bye J."/>
            <person name="Carder C."/>
            <person name="Chapman J.C."/>
            <person name="Clark S.Y."/>
            <person name="Clarke G."/>
            <person name="Clee C."/>
            <person name="Cobley V."/>
            <person name="Collier R.E."/>
            <person name="Corby N."/>
            <person name="Coville G.J."/>
            <person name="Davies J."/>
            <person name="Deadman R."/>
            <person name="Dunn M."/>
            <person name="Earthrowl M."/>
            <person name="Ellington A.G."/>
            <person name="Errington H."/>
            <person name="Frankish A."/>
            <person name="Frankland J."/>
            <person name="French L."/>
            <person name="Garner P."/>
            <person name="Garnett J."/>
            <person name="Gay L."/>
            <person name="Ghori M.R.J."/>
            <person name="Gibson R."/>
            <person name="Gilby L.M."/>
            <person name="Gillett W."/>
            <person name="Glithero R.J."/>
            <person name="Grafham D.V."/>
            <person name="Griffiths C."/>
            <person name="Griffiths-Jones S."/>
            <person name="Grocock R."/>
            <person name="Hammond S."/>
            <person name="Harrison E.S.I."/>
            <person name="Hart E."/>
            <person name="Haugen E."/>
            <person name="Heath P.D."/>
            <person name="Holmes S."/>
            <person name="Holt K."/>
            <person name="Howden P.J."/>
            <person name="Hunt A.R."/>
            <person name="Hunt S.E."/>
            <person name="Hunter G."/>
            <person name="Isherwood J."/>
            <person name="James R."/>
            <person name="Johnson C."/>
            <person name="Johnson D."/>
            <person name="Joy A."/>
            <person name="Kay M."/>
            <person name="Kershaw J.K."/>
            <person name="Kibukawa M."/>
            <person name="Kimberley A.M."/>
            <person name="King A."/>
            <person name="Knights A.J."/>
            <person name="Lad H."/>
            <person name="Laird G."/>
            <person name="Lawlor S."/>
            <person name="Leongamornlert D.A."/>
            <person name="Lloyd D.M."/>
            <person name="Loveland J."/>
            <person name="Lovell J."/>
            <person name="Lush M.J."/>
            <person name="Lyne R."/>
            <person name="Martin S."/>
            <person name="Mashreghi-Mohammadi M."/>
            <person name="Matthews L."/>
            <person name="Matthews N.S.W."/>
            <person name="McLaren S."/>
            <person name="Milne S."/>
            <person name="Mistry S."/>
            <person name="Moore M.J.F."/>
            <person name="Nickerson T."/>
            <person name="O'Dell C.N."/>
            <person name="Oliver K."/>
            <person name="Palmeiri A."/>
            <person name="Palmer S.A."/>
            <person name="Parker A."/>
            <person name="Patel D."/>
            <person name="Pearce A.V."/>
            <person name="Peck A.I."/>
            <person name="Pelan S."/>
            <person name="Phelps K."/>
            <person name="Phillimore B.J."/>
            <person name="Plumb R."/>
            <person name="Rajan J."/>
            <person name="Raymond C."/>
            <person name="Rouse G."/>
            <person name="Saenphimmachak C."/>
            <person name="Sehra H.K."/>
            <person name="Sheridan E."/>
            <person name="Shownkeen R."/>
            <person name="Sims S."/>
            <person name="Skuce C.D."/>
            <person name="Smith M."/>
            <person name="Steward C."/>
            <person name="Subramanian S."/>
            <person name="Sycamore N."/>
            <person name="Tracey A."/>
            <person name="Tromans A."/>
            <person name="Van Helmond Z."/>
            <person name="Wall M."/>
            <person name="Wallis J.M."/>
            <person name="White S."/>
            <person name="Whitehead S.L."/>
            <person name="Wilkinson J.E."/>
            <person name="Willey D.L."/>
            <person name="Williams H."/>
            <person name="Wilming L."/>
            <person name="Wray P.W."/>
            <person name="Wu Z."/>
            <person name="Coulson A."/>
            <person name="Vaudin M."/>
            <person name="Sulston J.E."/>
            <person name="Durbin R.M."/>
            <person name="Hubbard T."/>
            <person name="Wooster R."/>
            <person name="Dunham I."/>
            <person name="Carter N.P."/>
            <person name="McVean G."/>
            <person name="Ross M.T."/>
            <person name="Harrow J."/>
            <person name="Olson M.V."/>
            <person name="Beck S."/>
            <person name="Rogers J."/>
            <person name="Bentley D.R."/>
        </authorList>
    </citation>
    <scope>NUCLEOTIDE SEQUENCE [LARGE SCALE GENOMIC DNA]</scope>
    <source>
        <tissue>Brain</tissue>
    </source>
</reference>
<reference key="5">
    <citation type="submission" date="2005-09" db="EMBL/GenBank/DDBJ databases">
        <authorList>
            <person name="Mural R.J."/>
            <person name="Istrail S."/>
            <person name="Sutton G.G."/>
            <person name="Florea L."/>
            <person name="Halpern A.L."/>
            <person name="Mobarry C.M."/>
            <person name="Lippert R."/>
            <person name="Walenz B."/>
            <person name="Shatkay H."/>
            <person name="Dew I."/>
            <person name="Miller J.R."/>
            <person name="Flanigan M.J."/>
            <person name="Edwards N.J."/>
            <person name="Bolanos R."/>
            <person name="Fasulo D."/>
            <person name="Halldorsson B.V."/>
            <person name="Hannenhalli S."/>
            <person name="Turner R."/>
            <person name="Yooseph S."/>
            <person name="Lu F."/>
            <person name="Nusskern D.R."/>
            <person name="Shue B.C."/>
            <person name="Zheng X.H."/>
            <person name="Zhong F."/>
            <person name="Delcher A.L."/>
            <person name="Huson D.H."/>
            <person name="Kravitz S.A."/>
            <person name="Mouchard L."/>
            <person name="Reinert K."/>
            <person name="Remington K.A."/>
            <person name="Clark A.G."/>
            <person name="Waterman M.S."/>
            <person name="Eichler E.E."/>
            <person name="Adams M.D."/>
            <person name="Hunkapiller M.W."/>
            <person name="Myers E.W."/>
            <person name="Venter J.C."/>
        </authorList>
    </citation>
    <scope>NUCLEOTIDE SEQUENCE [LARGE SCALE GENOMIC DNA]</scope>
</reference>
<reference key="6">
    <citation type="journal article" date="2004" name="Genome Res.">
        <title>The status, quality, and expansion of the NIH full-length cDNA project: the Mammalian Gene Collection (MGC).</title>
        <authorList>
            <consortium name="The MGC Project Team"/>
        </authorList>
    </citation>
    <scope>NUCLEOTIDE SEQUENCE [LARGE SCALE MRNA] (ISOFORM 1)</scope>
    <source>
        <tissue>Brain</tissue>
    </source>
</reference>
<reference key="7">
    <citation type="journal article" date="1999" name="Genomics">
        <title>Cloning, characterization, and chromosome mapping of RPS6KC1, a novel putative member of the ribosome protein S6 kinase family, to chromosome 12q12-q13.1.</title>
        <authorList>
            <person name="Zhang H."/>
            <person name="Yu L."/>
            <person name="Mao N."/>
            <person name="Fu Q."/>
            <person name="Tu Q."/>
            <person name="Gao J."/>
            <person name="Zhao S."/>
        </authorList>
    </citation>
    <scope>NUCLEOTIDE SEQUENCE [MRNA] OF 598-1066 (ISOFORM 1)</scope>
</reference>
<reference key="8">
    <citation type="journal article" date="2007" name="BMC Genomics">
        <title>The full-ORF clone resource of the German cDNA consortium.</title>
        <authorList>
            <person name="Bechtel S."/>
            <person name="Rosenfelder H."/>
            <person name="Duda A."/>
            <person name="Schmidt C.P."/>
            <person name="Ernst U."/>
            <person name="Wellenreuther R."/>
            <person name="Mehrle A."/>
            <person name="Schuster C."/>
            <person name="Bahr A."/>
            <person name="Bloecker H."/>
            <person name="Heubner D."/>
            <person name="Hoerlein A."/>
            <person name="Michel G."/>
            <person name="Wedler H."/>
            <person name="Koehrer K."/>
            <person name="Ottenwaelder B."/>
            <person name="Poustka A."/>
            <person name="Wiemann S."/>
            <person name="Schupp I."/>
        </authorList>
    </citation>
    <scope>NUCLEOTIDE SEQUENCE [LARGE SCALE MRNA] OF 683-1066 (ISOFORM 1)</scope>
    <source>
        <tissue>Amygdala</tissue>
    </source>
</reference>
<reference key="9">
    <citation type="journal article" date="2005" name="Mol. Cells">
        <title>RPK118, a PX domain-containing protein, interacts with peroxiredoxin-3 through pseudo-kinase domains.</title>
        <authorList>
            <person name="Liu L."/>
            <person name="Yang C."/>
            <person name="Yuan J."/>
            <person name="Chen X."/>
            <person name="Xu J."/>
            <person name="Wei Y."/>
            <person name="Yang J."/>
            <person name="Lin G."/>
            <person name="Yu L."/>
        </authorList>
    </citation>
    <scope>FUNCTION</scope>
    <scope>SUBCELLULAR LOCATION</scope>
    <scope>INTERACTION WITH PRDX3</scope>
</reference>
<reference key="10">
    <citation type="journal article" date="2008" name="Proc. Natl. Acad. Sci. U.S.A.">
        <title>A quantitative atlas of mitotic phosphorylation.</title>
        <authorList>
            <person name="Dephoure N."/>
            <person name="Zhou C."/>
            <person name="Villen J."/>
            <person name="Beausoleil S.A."/>
            <person name="Bakalarski C.E."/>
            <person name="Elledge S.J."/>
            <person name="Gygi S.P."/>
        </authorList>
    </citation>
    <scope>IDENTIFICATION BY MASS SPECTROMETRY [LARGE SCALE ANALYSIS]</scope>
    <source>
        <tissue>Cervix carcinoma</tissue>
    </source>
</reference>
<reference key="11">
    <citation type="journal article" date="2009" name="Sci. Signal.">
        <title>Quantitative phosphoproteomic analysis of T cell receptor signaling reveals system-wide modulation of protein-protein interactions.</title>
        <authorList>
            <person name="Mayya V."/>
            <person name="Lundgren D.H."/>
            <person name="Hwang S.-I."/>
            <person name="Rezaul K."/>
            <person name="Wu L."/>
            <person name="Eng J.K."/>
            <person name="Rodionov V."/>
            <person name="Han D.K."/>
        </authorList>
    </citation>
    <scope>IDENTIFICATION BY MASS SPECTROMETRY [LARGE SCALE ANALYSIS]</scope>
    <source>
        <tissue>Leukemic T-cell</tissue>
    </source>
</reference>
<reference key="12">
    <citation type="journal article" date="2010" name="Sci. Signal.">
        <title>Quantitative phosphoproteomics reveals widespread full phosphorylation site occupancy during mitosis.</title>
        <authorList>
            <person name="Olsen J.V."/>
            <person name="Vermeulen M."/>
            <person name="Santamaria A."/>
            <person name="Kumar C."/>
            <person name="Miller M.L."/>
            <person name="Jensen L.J."/>
            <person name="Gnad F."/>
            <person name="Cox J."/>
            <person name="Jensen T.S."/>
            <person name="Nigg E.A."/>
            <person name="Brunak S."/>
            <person name="Mann M."/>
        </authorList>
    </citation>
    <scope>IDENTIFICATION BY MASS SPECTROMETRY [LARGE SCALE ANALYSIS]</scope>
    <source>
        <tissue>Cervix carcinoma</tissue>
    </source>
</reference>
<reference key="13">
    <citation type="journal article" date="2011" name="Sci. Signal.">
        <title>System-wide temporal characterization of the proteome and phosphoproteome of human embryonic stem cell differentiation.</title>
        <authorList>
            <person name="Rigbolt K.T."/>
            <person name="Prokhorova T.A."/>
            <person name="Akimov V."/>
            <person name="Henningsen J."/>
            <person name="Johansen P.T."/>
            <person name="Kratchmarova I."/>
            <person name="Kassem M."/>
            <person name="Mann M."/>
            <person name="Olsen J.V."/>
            <person name="Blagoev B."/>
        </authorList>
    </citation>
    <scope>PHOSPHORYLATION [LARGE SCALE ANALYSIS] AT SER-423 AND SER-427</scope>
    <scope>IDENTIFICATION BY MASS SPECTROMETRY [LARGE SCALE ANALYSIS]</scope>
</reference>
<reference key="14">
    <citation type="journal article" date="2013" name="J. Proteome Res.">
        <title>Toward a comprehensive characterization of a human cancer cell phosphoproteome.</title>
        <authorList>
            <person name="Zhou H."/>
            <person name="Di Palma S."/>
            <person name="Preisinger C."/>
            <person name="Peng M."/>
            <person name="Polat A.N."/>
            <person name="Heck A.J."/>
            <person name="Mohammed S."/>
        </authorList>
    </citation>
    <scope>PHOSPHORYLATION [LARGE SCALE ANALYSIS] AT SER-282; SER-423; SER-427; SER-455; SER-528; SER-583; SER-605; SER-661; SER-664; SER-667 AND SER-872</scope>
    <scope>IDENTIFICATION BY MASS SPECTROMETRY [LARGE SCALE ANALYSIS]</scope>
    <source>
        <tissue>Cervix carcinoma</tissue>
        <tissue>Erythroleukemia</tissue>
    </source>
</reference>
<reference key="15">
    <citation type="journal article" date="2014" name="J. Proteomics">
        <title>An enzyme assisted RP-RPLC approach for in-depth analysis of human liver phosphoproteome.</title>
        <authorList>
            <person name="Bian Y."/>
            <person name="Song C."/>
            <person name="Cheng K."/>
            <person name="Dong M."/>
            <person name="Wang F."/>
            <person name="Huang J."/>
            <person name="Sun D."/>
            <person name="Wang L."/>
            <person name="Ye M."/>
            <person name="Zou H."/>
        </authorList>
    </citation>
    <scope>PHOSPHORYLATION [LARGE SCALE ANALYSIS] AT SER-667</scope>
    <scope>IDENTIFICATION BY MASS SPECTROMETRY [LARGE SCALE ANALYSIS]</scope>
    <source>
        <tissue>Liver</tissue>
    </source>
</reference>
<reference key="16">
    <citation type="journal article" date="2007" name="Nature">
        <title>Patterns of somatic mutation in human cancer genomes.</title>
        <authorList>
            <person name="Greenman C."/>
            <person name="Stephens P."/>
            <person name="Smith R."/>
            <person name="Dalgliesh G.L."/>
            <person name="Hunter C."/>
            <person name="Bignell G."/>
            <person name="Davies H."/>
            <person name="Teague J."/>
            <person name="Butler A."/>
            <person name="Stevens C."/>
            <person name="Edkins S."/>
            <person name="O'Meara S."/>
            <person name="Vastrik I."/>
            <person name="Schmidt E.E."/>
            <person name="Avis T."/>
            <person name="Barthorpe S."/>
            <person name="Bhamra G."/>
            <person name="Buck G."/>
            <person name="Choudhury B."/>
            <person name="Clements J."/>
            <person name="Cole J."/>
            <person name="Dicks E."/>
            <person name="Forbes S."/>
            <person name="Gray K."/>
            <person name="Halliday K."/>
            <person name="Harrison R."/>
            <person name="Hills K."/>
            <person name="Hinton J."/>
            <person name="Jenkinson A."/>
            <person name="Jones D."/>
            <person name="Menzies A."/>
            <person name="Mironenko T."/>
            <person name="Perry J."/>
            <person name="Raine K."/>
            <person name="Richardson D."/>
            <person name="Shepherd R."/>
            <person name="Small A."/>
            <person name="Tofts C."/>
            <person name="Varian J."/>
            <person name="Webb T."/>
            <person name="West S."/>
            <person name="Widaa S."/>
            <person name="Yates A."/>
            <person name="Cahill D.P."/>
            <person name="Louis D.N."/>
            <person name="Goldstraw P."/>
            <person name="Nicholson A.G."/>
            <person name="Brasseur F."/>
            <person name="Looijenga L."/>
            <person name="Weber B.L."/>
            <person name="Chiew Y.-E."/>
            <person name="DeFazio A."/>
            <person name="Greaves M.F."/>
            <person name="Green A.R."/>
            <person name="Campbell P."/>
            <person name="Birney E."/>
            <person name="Easton D.F."/>
            <person name="Chenevix-Trench G."/>
            <person name="Tan M.-H."/>
            <person name="Khoo S.K."/>
            <person name="Teh B.T."/>
            <person name="Yuen S.T."/>
            <person name="Leung S.Y."/>
            <person name="Wooster R."/>
            <person name="Futreal P.A."/>
            <person name="Stratton M.R."/>
        </authorList>
    </citation>
    <scope>VARIANTS [LARGE SCALE ANALYSIS] THR-42; LYS-96; LEU-319; LEU-424; PRO-546; ILE-554; SER-575; ALA-663; PHE-853; TYR-1003 AND LYS-1022</scope>
</reference>
<dbReference type="EC" id="2.7.11.1"/>
<dbReference type="EMBL" id="AB070706">
    <property type="protein sequence ID" value="BAB63956.1"/>
    <property type="molecule type" value="mRNA"/>
</dbReference>
<dbReference type="EMBL" id="AF477978">
    <property type="protein sequence ID" value="AAL84818.1"/>
    <property type="molecule type" value="mRNA"/>
</dbReference>
<dbReference type="EMBL" id="AK122921">
    <property type="status" value="NOT_ANNOTATED_CDS"/>
    <property type="molecule type" value="mRNA"/>
</dbReference>
<dbReference type="EMBL" id="AK122989">
    <property type="protein sequence ID" value="BAG53836.1"/>
    <property type="molecule type" value="mRNA"/>
</dbReference>
<dbReference type="EMBL" id="AL645860">
    <property type="status" value="NOT_ANNOTATED_CDS"/>
    <property type="molecule type" value="Genomic_DNA"/>
</dbReference>
<dbReference type="EMBL" id="AL512449">
    <property type="status" value="NOT_ANNOTATED_CDS"/>
    <property type="molecule type" value="Genomic_DNA"/>
</dbReference>
<dbReference type="EMBL" id="AL583826">
    <property type="status" value="NOT_ANNOTATED_CDS"/>
    <property type="molecule type" value="Genomic_DNA"/>
</dbReference>
<dbReference type="EMBL" id="CH471100">
    <property type="protein sequence ID" value="EAW93362.1"/>
    <property type="molecule type" value="Genomic_DNA"/>
</dbReference>
<dbReference type="EMBL" id="CH471100">
    <property type="protein sequence ID" value="EAW93363.1"/>
    <property type="molecule type" value="Genomic_DNA"/>
</dbReference>
<dbReference type="EMBL" id="BC104769">
    <property type="protein sequence ID" value="AAI04770.1"/>
    <property type="molecule type" value="mRNA"/>
</dbReference>
<dbReference type="EMBL" id="AF037447">
    <property type="protein sequence ID" value="AAF13027.1"/>
    <property type="molecule type" value="mRNA"/>
</dbReference>
<dbReference type="EMBL" id="AL356893">
    <property type="protein sequence ID" value="CAB92850.1"/>
    <property type="status" value="ALT_INIT"/>
    <property type="molecule type" value="mRNA"/>
</dbReference>
<dbReference type="CCDS" id="CCDS1513.1">
    <molecule id="Q96S38-1"/>
</dbReference>
<dbReference type="CCDS" id="CCDS44317.1">
    <molecule id="Q96S38-2"/>
</dbReference>
<dbReference type="RefSeq" id="NP_001129610.1">
    <molecule id="Q96S38-2"/>
    <property type="nucleotide sequence ID" value="NM_001136138.4"/>
</dbReference>
<dbReference type="RefSeq" id="NP_036556.2">
    <molecule id="Q96S38-1"/>
    <property type="nucleotide sequence ID" value="NM_012424.4"/>
</dbReference>
<dbReference type="SMR" id="Q96S38"/>
<dbReference type="BioGRID" id="117810">
    <property type="interactions" value="29"/>
</dbReference>
<dbReference type="FunCoup" id="Q96S38">
    <property type="interactions" value="1956"/>
</dbReference>
<dbReference type="IntAct" id="Q96S38">
    <property type="interactions" value="14"/>
</dbReference>
<dbReference type="STRING" id="9606.ENSP00000355927"/>
<dbReference type="ChEMBL" id="CHEMBL1795193"/>
<dbReference type="iPTMnet" id="Q96S38"/>
<dbReference type="PhosphoSitePlus" id="Q96S38"/>
<dbReference type="BioMuta" id="RPS6KC1"/>
<dbReference type="DMDM" id="94717650"/>
<dbReference type="CPTAC" id="non-CPTAC-5679"/>
<dbReference type="jPOST" id="Q96S38"/>
<dbReference type="MassIVE" id="Q96S38"/>
<dbReference type="PaxDb" id="9606-ENSP00000355927"/>
<dbReference type="PeptideAtlas" id="Q96S38"/>
<dbReference type="ProteomicsDB" id="3310"/>
<dbReference type="ProteomicsDB" id="78062">
    <molecule id="Q96S38-1"/>
</dbReference>
<dbReference type="Pumba" id="Q96S38"/>
<dbReference type="TopDownProteomics" id="Q96S38-1">
    <molecule id="Q96S38-1"/>
</dbReference>
<dbReference type="Antibodypedia" id="34615">
    <property type="antibodies" value="162 antibodies from 27 providers"/>
</dbReference>
<dbReference type="DNASU" id="26750"/>
<dbReference type="Ensembl" id="ENST00000366959.4">
    <molecule id="Q96S38-2"/>
    <property type="protein sequence ID" value="ENSP00000355926.3"/>
    <property type="gene ID" value="ENSG00000136643.12"/>
</dbReference>
<dbReference type="Ensembl" id="ENST00000366960.8">
    <molecule id="Q96S38-1"/>
    <property type="protein sequence ID" value="ENSP00000355927.3"/>
    <property type="gene ID" value="ENSG00000136643.12"/>
</dbReference>
<dbReference type="GeneID" id="26750"/>
<dbReference type="KEGG" id="hsa:26750"/>
<dbReference type="MANE-Select" id="ENST00000366960.8">
    <property type="protein sequence ID" value="ENSP00000355927.3"/>
    <property type="RefSeq nucleotide sequence ID" value="NM_012424.6"/>
    <property type="RefSeq protein sequence ID" value="NP_036556.2"/>
</dbReference>
<dbReference type="UCSC" id="uc001hkd.5">
    <molecule id="Q96S38-1"/>
    <property type="organism name" value="human"/>
</dbReference>
<dbReference type="AGR" id="HGNC:10439"/>
<dbReference type="CTD" id="26750"/>
<dbReference type="DisGeNET" id="26750"/>
<dbReference type="GeneCards" id="RPS6KC1"/>
<dbReference type="HGNC" id="HGNC:10439">
    <property type="gene designation" value="RPS6KC1"/>
</dbReference>
<dbReference type="HPA" id="ENSG00000136643">
    <property type="expression patterns" value="Low tissue specificity"/>
</dbReference>
<dbReference type="MalaCards" id="RPS6KC1"/>
<dbReference type="MIM" id="617517">
    <property type="type" value="gene"/>
</dbReference>
<dbReference type="neXtProt" id="NX_Q96S38"/>
<dbReference type="OpenTargets" id="ENSG00000136643"/>
<dbReference type="PharmGKB" id="PA34854"/>
<dbReference type="VEuPathDB" id="HostDB:ENSG00000136643"/>
<dbReference type="eggNOG" id="KOG0603">
    <property type="taxonomic scope" value="Eukaryota"/>
</dbReference>
<dbReference type="eggNOG" id="KOG2101">
    <property type="taxonomic scope" value="Eukaryota"/>
</dbReference>
<dbReference type="GeneTree" id="ENSGT00940000155656"/>
<dbReference type="HOGENOM" id="CLU_014272_0_0_1"/>
<dbReference type="InParanoid" id="Q96S38"/>
<dbReference type="OMA" id="GHSSELW"/>
<dbReference type="OrthoDB" id="1278353at2759"/>
<dbReference type="PAN-GO" id="Q96S38">
    <property type="GO annotations" value="1 GO annotation based on evolutionary models"/>
</dbReference>
<dbReference type="PhylomeDB" id="Q96S38"/>
<dbReference type="TreeFam" id="TF323964"/>
<dbReference type="PathwayCommons" id="Q96S38"/>
<dbReference type="SignaLink" id="Q96S38"/>
<dbReference type="SIGNOR" id="Q96S38"/>
<dbReference type="BioGRID-ORCS" id="26750">
    <property type="hits" value="8 hits in 1164 CRISPR screens"/>
</dbReference>
<dbReference type="ChiTaRS" id="RPS6KC1">
    <property type="organism name" value="human"/>
</dbReference>
<dbReference type="GeneWiki" id="RPS6KC1"/>
<dbReference type="GenomeRNAi" id="26750"/>
<dbReference type="Pharos" id="Q96S38">
    <property type="development level" value="Tdark"/>
</dbReference>
<dbReference type="PRO" id="PR:Q96S38"/>
<dbReference type="Proteomes" id="UP000005640">
    <property type="component" value="Chromosome 1"/>
</dbReference>
<dbReference type="RNAct" id="Q96S38">
    <property type="molecule type" value="protein"/>
</dbReference>
<dbReference type="Bgee" id="ENSG00000136643">
    <property type="expression patterns" value="Expressed in sperm and 193 other cell types or tissues"/>
</dbReference>
<dbReference type="ExpressionAtlas" id="Q96S38">
    <property type="expression patterns" value="baseline and differential"/>
</dbReference>
<dbReference type="GO" id="GO:0005769">
    <property type="term" value="C:early endosome"/>
    <property type="evidence" value="ECO:0000314"/>
    <property type="project" value="UniProtKB"/>
</dbReference>
<dbReference type="GO" id="GO:0005768">
    <property type="term" value="C:endosome"/>
    <property type="evidence" value="ECO:0000314"/>
    <property type="project" value="HPA"/>
</dbReference>
<dbReference type="GO" id="GO:0005764">
    <property type="term" value="C:lysosome"/>
    <property type="evidence" value="ECO:0000314"/>
    <property type="project" value="HPA"/>
</dbReference>
<dbReference type="GO" id="GO:0016020">
    <property type="term" value="C:membrane"/>
    <property type="evidence" value="ECO:0007669"/>
    <property type="project" value="UniProtKB-SubCell"/>
</dbReference>
<dbReference type="GO" id="GO:0005524">
    <property type="term" value="F:ATP binding"/>
    <property type="evidence" value="ECO:0007669"/>
    <property type="project" value="UniProtKB-KW"/>
</dbReference>
<dbReference type="GO" id="GO:0035091">
    <property type="term" value="F:phosphatidylinositol binding"/>
    <property type="evidence" value="ECO:0007669"/>
    <property type="project" value="InterPro"/>
</dbReference>
<dbReference type="GO" id="GO:0106310">
    <property type="term" value="F:protein serine kinase activity"/>
    <property type="evidence" value="ECO:0007669"/>
    <property type="project" value="RHEA"/>
</dbReference>
<dbReference type="GO" id="GO:0004674">
    <property type="term" value="F:protein serine/threonine kinase activity"/>
    <property type="evidence" value="ECO:0000304"/>
    <property type="project" value="ProtInc"/>
</dbReference>
<dbReference type="GO" id="GO:0007165">
    <property type="term" value="P:signal transduction"/>
    <property type="evidence" value="ECO:0000304"/>
    <property type="project" value="ProtInc"/>
</dbReference>
<dbReference type="CDD" id="cd02677">
    <property type="entry name" value="MIT_SNX15"/>
    <property type="match status" value="1"/>
</dbReference>
<dbReference type="CDD" id="cd07287">
    <property type="entry name" value="PX_RPK118_like"/>
    <property type="match status" value="1"/>
</dbReference>
<dbReference type="CDD" id="cd05576">
    <property type="entry name" value="STKc_RPK118_like"/>
    <property type="match status" value="1"/>
</dbReference>
<dbReference type="FunFam" id="1.10.510.10:FF:000221">
    <property type="entry name" value="ribosomal protein S6 kinase delta-1 isoform X1"/>
    <property type="match status" value="1"/>
</dbReference>
<dbReference type="FunFam" id="1.20.58.80:FF:000005">
    <property type="entry name" value="ribosomal protein S6 kinase delta-1 isoform X1"/>
    <property type="match status" value="1"/>
</dbReference>
<dbReference type="FunFam" id="3.30.1520.10:FF:000017">
    <property type="entry name" value="ribosomal protein S6 kinase delta-1 isoform X1"/>
    <property type="match status" value="1"/>
</dbReference>
<dbReference type="Gene3D" id="1.20.58.80">
    <property type="entry name" value="Phosphotransferase system, lactose/cellobiose-type IIA subunit"/>
    <property type="match status" value="1"/>
</dbReference>
<dbReference type="Gene3D" id="3.30.1520.10">
    <property type="entry name" value="Phox-like domain"/>
    <property type="match status" value="1"/>
</dbReference>
<dbReference type="Gene3D" id="1.10.510.10">
    <property type="entry name" value="Transferase(Phosphotransferase) domain 1"/>
    <property type="match status" value="1"/>
</dbReference>
<dbReference type="InterPro" id="IPR051866">
    <property type="entry name" value="Intracell_Sig-Traffick_Protein"/>
</dbReference>
<dbReference type="InterPro" id="IPR011009">
    <property type="entry name" value="Kinase-like_dom_sf"/>
</dbReference>
<dbReference type="InterPro" id="IPR007330">
    <property type="entry name" value="MIT_dom"/>
</dbReference>
<dbReference type="InterPro" id="IPR036181">
    <property type="entry name" value="MIT_dom_sf"/>
</dbReference>
<dbReference type="InterPro" id="IPR000719">
    <property type="entry name" value="Prot_kinase_dom"/>
</dbReference>
<dbReference type="InterPro" id="IPR001683">
    <property type="entry name" value="PX_dom"/>
</dbReference>
<dbReference type="InterPro" id="IPR036871">
    <property type="entry name" value="PX_dom_sf"/>
</dbReference>
<dbReference type="InterPro" id="IPR042132">
    <property type="entry name" value="PX_S6K-delta-1"/>
</dbReference>
<dbReference type="InterPro" id="IPR035053">
    <property type="entry name" value="STK_RPK118-like"/>
</dbReference>
<dbReference type="PANTHER" id="PTHR15508">
    <property type="entry name" value="RIBOSOMAL PROTEIN S6 KINASE"/>
    <property type="match status" value="1"/>
</dbReference>
<dbReference type="PANTHER" id="PTHR15508:SF2">
    <property type="entry name" value="RIBOSOMAL PROTEIN S6 KINASE DELTA-1"/>
    <property type="match status" value="1"/>
</dbReference>
<dbReference type="Pfam" id="PF04212">
    <property type="entry name" value="MIT"/>
    <property type="match status" value="1"/>
</dbReference>
<dbReference type="Pfam" id="PF00069">
    <property type="entry name" value="Pkinase"/>
    <property type="match status" value="1"/>
</dbReference>
<dbReference type="Pfam" id="PF00787">
    <property type="entry name" value="PX"/>
    <property type="match status" value="1"/>
</dbReference>
<dbReference type="SMART" id="SM00745">
    <property type="entry name" value="MIT"/>
    <property type="match status" value="1"/>
</dbReference>
<dbReference type="SMART" id="SM00312">
    <property type="entry name" value="PX"/>
    <property type="match status" value="1"/>
</dbReference>
<dbReference type="SMART" id="SM00220">
    <property type="entry name" value="S_TKc"/>
    <property type="match status" value="1"/>
</dbReference>
<dbReference type="SUPFAM" id="SSF116846">
    <property type="entry name" value="MIT domain"/>
    <property type="match status" value="1"/>
</dbReference>
<dbReference type="SUPFAM" id="SSF56112">
    <property type="entry name" value="Protein kinase-like (PK-like)"/>
    <property type="match status" value="1"/>
</dbReference>
<dbReference type="SUPFAM" id="SSF64268">
    <property type="entry name" value="PX domain"/>
    <property type="match status" value="1"/>
</dbReference>
<dbReference type="PROSITE" id="PS50011">
    <property type="entry name" value="PROTEIN_KINASE_DOM"/>
    <property type="match status" value="1"/>
</dbReference>
<dbReference type="PROSITE" id="PS50195">
    <property type="entry name" value="PX"/>
    <property type="match status" value="1"/>
</dbReference>
<keyword id="KW-0025">Alternative splicing</keyword>
<keyword id="KW-0067">ATP-binding</keyword>
<keyword id="KW-0963">Cytoplasm</keyword>
<keyword id="KW-0967">Endosome</keyword>
<keyword id="KW-0418">Kinase</keyword>
<keyword id="KW-0446">Lipid-binding</keyword>
<keyword id="KW-0472">Membrane</keyword>
<keyword id="KW-0547">Nucleotide-binding</keyword>
<keyword id="KW-0597">Phosphoprotein</keyword>
<keyword id="KW-1267">Proteomics identification</keyword>
<keyword id="KW-1185">Reference proteome</keyword>
<keyword id="KW-0677">Repeat</keyword>
<keyword id="KW-0723">Serine/threonine-protein kinase</keyword>
<keyword id="KW-0808">Transferase</keyword>
<organism>
    <name type="scientific">Homo sapiens</name>
    <name type="common">Human</name>
    <dbReference type="NCBI Taxonomy" id="9606"/>
    <lineage>
        <taxon>Eukaryota</taxon>
        <taxon>Metazoa</taxon>
        <taxon>Chordata</taxon>
        <taxon>Craniata</taxon>
        <taxon>Vertebrata</taxon>
        <taxon>Euteleostomi</taxon>
        <taxon>Mammalia</taxon>
        <taxon>Eutheria</taxon>
        <taxon>Euarchontoglires</taxon>
        <taxon>Primates</taxon>
        <taxon>Haplorrhini</taxon>
        <taxon>Catarrhini</taxon>
        <taxon>Hominidae</taxon>
        <taxon>Homo</taxon>
    </lineage>
</organism>
<gene>
    <name type="primary">RPS6KC1</name>
    <name type="synonym">RPK118</name>
</gene>
<protein>
    <recommendedName>
        <fullName>Ribosomal protein S6 kinase delta-1</fullName>
        <shortName>S6K-delta-1</shortName>
        <ecNumber>2.7.11.1</ecNumber>
    </recommendedName>
    <alternativeName>
        <fullName>52 kDa ribosomal protein S6 kinase</fullName>
    </alternativeName>
    <alternativeName>
        <fullName>Ribosomal S6 kinase-like protein with two PSK domains 118 kDa protein</fullName>
    </alternativeName>
    <alternativeName>
        <fullName>SPHK1-binding protein</fullName>
    </alternativeName>
</protein>
<name>KS6C1_HUMAN</name>
<feature type="chain" id="PRO_0000233127" description="Ribosomal protein S6 kinase delta-1">
    <location>
        <begin position="1"/>
        <end position="1066"/>
    </location>
</feature>
<feature type="domain" description="PX" evidence="2">
    <location>
        <begin position="8"/>
        <end position="132"/>
    </location>
</feature>
<feature type="domain" description="MIT">
    <location>
        <begin position="277"/>
        <end position="305"/>
    </location>
</feature>
<feature type="domain" description="Protein kinase 1" evidence="3">
    <location>
        <begin position="344"/>
        <end position="445"/>
    </location>
</feature>
<feature type="domain" description="Protein kinase 2" evidence="3">
    <location>
        <begin position="794"/>
        <end position="1056"/>
    </location>
</feature>
<feature type="region of interest" description="Disordered" evidence="4">
    <location>
        <begin position="207"/>
        <end position="228"/>
    </location>
</feature>
<feature type="region of interest" description="Disordered" evidence="4">
    <location>
        <begin position="441"/>
        <end position="509"/>
    </location>
</feature>
<feature type="region of interest" description="Disordered" evidence="4">
    <location>
        <begin position="553"/>
        <end position="596"/>
    </location>
</feature>
<feature type="compositionally biased region" description="Basic and acidic residues" evidence="4">
    <location>
        <begin position="212"/>
        <end position="223"/>
    </location>
</feature>
<feature type="compositionally biased region" description="Low complexity" evidence="4">
    <location>
        <begin position="448"/>
        <end position="458"/>
    </location>
</feature>
<feature type="compositionally biased region" description="Polar residues" evidence="4">
    <location>
        <begin position="474"/>
        <end position="483"/>
    </location>
</feature>
<feature type="compositionally biased region" description="Low complexity" evidence="4">
    <location>
        <begin position="492"/>
        <end position="503"/>
    </location>
</feature>
<feature type="compositionally biased region" description="Low complexity" evidence="4">
    <location>
        <begin position="582"/>
        <end position="593"/>
    </location>
</feature>
<feature type="active site" description="Proton acceptor" evidence="3">
    <location>
        <position position="929"/>
    </location>
</feature>
<feature type="binding site" evidence="3">
    <location>
        <begin position="801"/>
        <end position="809"/>
    </location>
    <ligand>
        <name>ATP</name>
        <dbReference type="ChEBI" id="CHEBI:30616"/>
    </ligand>
</feature>
<feature type="binding site" evidence="3">
    <location>
        <position position="820"/>
    </location>
    <ligand>
        <name>ATP</name>
        <dbReference type="ChEBI" id="CHEBI:30616"/>
    </ligand>
</feature>
<feature type="modified residue" description="Phosphoserine" evidence="11">
    <location>
        <position position="282"/>
    </location>
</feature>
<feature type="modified residue" description="Phosphoserine" evidence="10 11">
    <location>
        <position position="423"/>
    </location>
</feature>
<feature type="modified residue" description="Phosphoserine" evidence="10 11">
    <location>
        <position position="427"/>
    </location>
</feature>
<feature type="modified residue" description="Phosphoserine" evidence="1">
    <location>
        <position position="449"/>
    </location>
</feature>
<feature type="modified residue" description="Phosphoserine" evidence="11">
    <location>
        <position position="455"/>
    </location>
</feature>
<feature type="modified residue" description="Phosphoserine" evidence="1">
    <location>
        <position position="494"/>
    </location>
</feature>
<feature type="modified residue" description="Phosphoserine" evidence="11">
    <location>
        <position position="528"/>
    </location>
</feature>
<feature type="modified residue" description="Phosphoserine" evidence="11">
    <location>
        <position position="583"/>
    </location>
</feature>
<feature type="modified residue" description="Phosphoserine" evidence="11">
    <location>
        <position position="605"/>
    </location>
</feature>
<feature type="modified residue" description="Phosphoserine" evidence="1">
    <location>
        <position position="608"/>
    </location>
</feature>
<feature type="modified residue" description="Phosphoserine" evidence="1">
    <location>
        <position position="640"/>
    </location>
</feature>
<feature type="modified residue" description="Phosphoserine" evidence="11">
    <location>
        <position position="661"/>
    </location>
</feature>
<feature type="modified residue" description="Phosphoserine" evidence="11">
    <location>
        <position position="664"/>
    </location>
</feature>
<feature type="modified residue" description="Phosphoserine" evidence="11 12">
    <location>
        <position position="667"/>
    </location>
</feature>
<feature type="modified residue" description="Phosphoserine" evidence="1">
    <location>
        <position position="794"/>
    </location>
</feature>
<feature type="modified residue" description="Phosphoserine" evidence="11">
    <location>
        <position position="872"/>
    </location>
</feature>
<feature type="splice variant" id="VSP_046333" description="In isoform 2." evidence="8">
    <location>
        <begin position="36"/>
        <end position="47"/>
    </location>
</feature>
<feature type="sequence variant" id="VAR_040647" description="In dbSNP:rs56087470." evidence="7">
    <original>P</original>
    <variation>T</variation>
    <location>
        <position position="42"/>
    </location>
</feature>
<feature type="sequence variant" id="VAR_040648" description="In dbSNP:rs56032860." evidence="7">
    <original>E</original>
    <variation>K</variation>
    <location>
        <position position="96"/>
    </location>
</feature>
<feature type="sequence variant" id="VAR_040649" description="In dbSNP:rs56369827." evidence="7">
    <original>P</original>
    <variation>L</variation>
    <location>
        <position position="319"/>
    </location>
</feature>
<feature type="sequence variant" id="VAR_040650" description="In dbSNP:rs56183862." evidence="7">
    <original>P</original>
    <variation>L</variation>
    <location>
        <position position="424"/>
    </location>
</feature>
<feature type="sequence variant" id="VAR_040651" description="In dbSNP:rs35281247." evidence="7">
    <original>A</original>
    <variation>P</variation>
    <location>
        <position position="546"/>
    </location>
</feature>
<feature type="sequence variant" id="VAR_040652" description="In a lung neuroendocrine carcinoma sample; somatic mutation." evidence="7">
    <original>L</original>
    <variation>I</variation>
    <location>
        <position position="554"/>
    </location>
</feature>
<feature type="sequence variant" id="VAR_051635" description="In dbSNP:rs17020314.">
    <original>P</original>
    <variation>R</variation>
    <location>
        <position position="561"/>
    </location>
</feature>
<feature type="sequence variant" id="VAR_040653" description="In dbSNP:rs56060894." evidence="7">
    <original>N</original>
    <variation>S</variation>
    <location>
        <position position="575"/>
    </location>
</feature>
<feature type="sequence variant" id="VAR_040654" description="In an ovarian mucinous carcinoma sample; somatic mutation." evidence="7">
    <original>G</original>
    <variation>A</variation>
    <location>
        <position position="663"/>
    </location>
</feature>
<feature type="sequence variant" id="VAR_040655" description="In dbSNP:rs34080597." evidence="7">
    <original>L</original>
    <variation>F</variation>
    <location>
        <position position="853"/>
    </location>
</feature>
<feature type="sequence variant" id="VAR_040656" description="In a lung adenocarcinoma sample; somatic mutation." evidence="7">
    <original>C</original>
    <variation>Y</variation>
    <location>
        <position position="1003"/>
    </location>
</feature>
<feature type="sequence variant" id="VAR_040657" description="In a breast infiltrating ductal carcinoma sample; somatic mutation." evidence="7">
    <original>E</original>
    <variation>K</variation>
    <location>
        <position position="1022"/>
    </location>
</feature>
<feature type="sequence conflict" description="In Ref. 1; BAB63956." evidence="9" ref="1">
    <original>R</original>
    <variation>G</variation>
    <location>
        <position position="35"/>
    </location>
</feature>
<feature type="sequence conflict" description="In Ref. 1; BAB63956." evidence="9" ref="1">
    <original>A</original>
    <variation>V</variation>
    <location>
        <position position="250"/>
    </location>
</feature>
<feature type="sequence conflict" description="In Ref. 7." evidence="9" ref="7">
    <location>
        <position position="1065"/>
    </location>
</feature>
<comment type="function">
    <text evidence="5 6">May be involved in transmitting sphingosine-1 phosphate (SPP)-mediated signaling into the cell (PubMed:12077123). Plays a role in the recruitment of PRDX3 to early endosomes (PubMed:15750338).</text>
</comment>
<comment type="catalytic activity">
    <reaction>
        <text>L-seryl-[protein] + ATP = O-phospho-L-seryl-[protein] + ADP + H(+)</text>
        <dbReference type="Rhea" id="RHEA:17989"/>
        <dbReference type="Rhea" id="RHEA-COMP:9863"/>
        <dbReference type="Rhea" id="RHEA-COMP:11604"/>
        <dbReference type="ChEBI" id="CHEBI:15378"/>
        <dbReference type="ChEBI" id="CHEBI:29999"/>
        <dbReference type="ChEBI" id="CHEBI:30616"/>
        <dbReference type="ChEBI" id="CHEBI:83421"/>
        <dbReference type="ChEBI" id="CHEBI:456216"/>
        <dbReference type="EC" id="2.7.11.1"/>
    </reaction>
</comment>
<comment type="catalytic activity">
    <reaction>
        <text>L-threonyl-[protein] + ATP = O-phospho-L-threonyl-[protein] + ADP + H(+)</text>
        <dbReference type="Rhea" id="RHEA:46608"/>
        <dbReference type="Rhea" id="RHEA-COMP:11060"/>
        <dbReference type="Rhea" id="RHEA-COMP:11605"/>
        <dbReference type="ChEBI" id="CHEBI:15378"/>
        <dbReference type="ChEBI" id="CHEBI:30013"/>
        <dbReference type="ChEBI" id="CHEBI:30616"/>
        <dbReference type="ChEBI" id="CHEBI:61977"/>
        <dbReference type="ChEBI" id="CHEBI:456216"/>
        <dbReference type="EC" id="2.7.11.1"/>
    </reaction>
</comment>
<comment type="subunit">
    <text evidence="5 6">Interacts with SPHK1 and phosphatidylinositol 3-phosphate (PubMed:12077123). Interacts (via PX domain) with PRDX3 (PubMed:15750338).</text>
</comment>
<comment type="interaction">
    <interactant intactId="EBI-347731">
        <id>Q96S38</id>
    </interactant>
    <interactant intactId="EBI-2834112">
        <id>Q8IWF6</id>
        <label>DENND6A</label>
    </interactant>
    <organismsDiffer>false</organismsDiffer>
    <experiments>2</experiments>
</comment>
<comment type="interaction">
    <interactant intactId="EBI-347731">
        <id>Q96S38</id>
    </interactant>
    <interactant intactId="EBI-12874016">
        <id>P11473-2</id>
        <label>VDR</label>
    </interactant>
    <organismsDiffer>false</organismsDiffer>
    <experiments>3</experiments>
</comment>
<comment type="subcellular location">
    <subcellularLocation>
        <location evidence="5 6">Cytoplasm</location>
    </subcellularLocation>
    <subcellularLocation>
        <location evidence="5">Membrane</location>
    </subcellularLocation>
    <subcellularLocation>
        <location evidence="6">Early endosome</location>
    </subcellularLocation>
</comment>
<comment type="alternative products">
    <event type="alternative splicing"/>
    <isoform>
        <id>Q96S38-1</id>
        <name>1</name>
        <sequence type="displayed"/>
    </isoform>
    <isoform>
        <id>Q96S38-2</id>
        <name>2</name>
        <sequence type="described" ref="VSP_046333"/>
    </isoform>
</comment>
<comment type="tissue specificity">
    <text evidence="5">Highly expressed in testis, skeletal muscle, brain, heart, placenta, kidney and liver and weakly expressed in thymus, small intestine, lung and colon.</text>
</comment>
<comment type="domain">
    <text evidence="6">The PX domain is essential for its localization to the early endosomes.</text>
</comment>
<comment type="domain">
    <text>The first protein kinase domain appears to be a pseudokinase domain as it does not contain the classical characteristics, such as the ATP-binding motif, ATP-binding site and active site.</text>
</comment>
<comment type="similarity">
    <text evidence="3">Belongs to the protein kinase superfamily. Ser/Thr protein kinase family. S6 kinase subfamily.</text>
</comment>
<comment type="caution">
    <text evidence="9">Instead of Lys-820, Arg-820 is found at the binding site.</text>
</comment>
<comment type="sequence caution" evidence="9">
    <conflict type="erroneous initiation">
        <sequence resource="EMBL-CDS" id="CAB92850"/>
    </conflict>
</comment>
<sequence>MTSYRERSADLARFYTVTEPQRHPRGYTVYKVTARVVSRRNPEDVQEIIVWKRYSDFKKLHKELWQIHKNLFRHSELFPPFAKGIVFGRFDETVIEERRQCAEDLLQFSANIPALYNSKQLEDFFKGGIINDSSELIGPAEAHSDSLIDTFPECSTEGFSSDSDLVSLTVDVDSLAELDDGMASNQNSPIRTFGLNLSSDSSALGAVASDSEQSKTEEERESRSLFPGSLKPKLGKRDYLEKAGELIKLALKKEEEDDYEAASDFYRKGVDLLLEGVQGESSPTRREAVKRRTAEYLMRAESISSLYGKPQLDDVSQPPGSLSSRPLWNLRSPAEELKAFRVLGVIDKVLLVMDTRTEQTFILKGLRKSSEYSRNRKTIIPRCVPNMVCLHKYIISEESVFLVLQHAEGGKLWSYISKFLNRSPEESFDIKEVKKPTLAKVHLQQPTSSPQDSSSFESRGSDGGSMLKALPLKSSLTPSSQDDSNQEDDGQDSSPKWPDSGSSSEEECTTSYLTLCNEYGQEKIEPGSLNEEPFMKTEGNGVDTKAIKSFPAHLAADSDSPSTQLRAHELKFFPNDDPEAVSSPRTSDSLSRSKNSPMEFFRIDSKDSASELLGLDFGEKLYSLKSEPLKPFFTLPDGDSASRSFNTSESKVEFKAQDTISRGSDDSVPVISFKDAAFDDVSGTDEGRPDLLVNLPGELESTREAAAMGPTKFTQTNIGIIENKLLEAPDVLCLRLSTEQCQAHEEKGIEELSDPSGPKSYSITEKHYAQEDPRMLFVAAVDHSSSGDMSLLPSSDPKFQGLGVVESAVTANNTEESLFRICSPLSGANEYIASTDTLKTEEVLLFTDQTDDLAKEEPTSLFQRDSETKGESGLVLEGDKEIHQIFEDLDKKLALASRFYIPEGCIQRWAAEMVVALDALHREGIVCRDLNPNNILLNDRGHIQLTYFSRWSEVEDSCDSDAIERMYCAPEVGAITEETEACDWWSLGAVLFELLTGKTLVECHPAGINTHTTLNMPECVSEEARSLIQQLLQFNPLERLGAGVAGVEDIKSHPFFTPVDWAELMR</sequence>